<organism>
    <name type="scientific">Mycoplasma genitalium (strain ATCC 33530 / DSM 19775 / NCTC 10195 / G37)</name>
    <name type="common">Mycoplasmoides genitalium</name>
    <dbReference type="NCBI Taxonomy" id="243273"/>
    <lineage>
        <taxon>Bacteria</taxon>
        <taxon>Bacillati</taxon>
        <taxon>Mycoplasmatota</taxon>
        <taxon>Mycoplasmoidales</taxon>
        <taxon>Mycoplasmoidaceae</taxon>
        <taxon>Mycoplasmoides</taxon>
    </lineage>
</organism>
<reference key="1">
    <citation type="journal article" date="1995" name="Science">
        <title>The minimal gene complement of Mycoplasma genitalium.</title>
        <authorList>
            <person name="Fraser C.M."/>
            <person name="Gocayne J.D."/>
            <person name="White O."/>
            <person name="Adams M.D."/>
            <person name="Clayton R.A."/>
            <person name="Fleischmann R.D."/>
            <person name="Bult C.J."/>
            <person name="Kerlavage A.R."/>
            <person name="Sutton G.G."/>
            <person name="Kelley J.M."/>
            <person name="Fritchman J.L."/>
            <person name="Weidman J.F."/>
            <person name="Small K.V."/>
            <person name="Sandusky M."/>
            <person name="Fuhrmann J.L."/>
            <person name="Nguyen D.T."/>
            <person name="Utterback T.R."/>
            <person name="Saudek D.M."/>
            <person name="Phillips C.A."/>
            <person name="Merrick J.M."/>
            <person name="Tomb J.-F."/>
            <person name="Dougherty B.A."/>
            <person name="Bott K.F."/>
            <person name="Hu P.-C."/>
            <person name="Lucier T.S."/>
            <person name="Peterson S.N."/>
            <person name="Smith H.O."/>
            <person name="Hutchison C.A. III"/>
            <person name="Venter J.C."/>
        </authorList>
    </citation>
    <scope>NUCLEOTIDE SEQUENCE [LARGE SCALE GENOMIC DNA]</scope>
    <source>
        <strain>ATCC 33530 / DSM 19775 / NCTC 10195 / G37</strain>
    </source>
</reference>
<accession>P47316</accession>
<sequence>MSDTNTEKPELVSLNKLSEMRTNIGMVKRYWNPKMGFFIEPERKHNNDLLKLDLQYQALKTAYNFIKDVVKNHGQILFVGTKNDYVKKLVIDIAKRVNVAYITQRWLGGTLTNFKTLSISINKLNKLVEQQKQNANDLTKKENLLLSREIERLEKFFGGVKNLKRLPNLIVIDDPVYEKNAVLEANSLKIPVVALCNTNTNPELVDFIIPANNHQPQSTCLLMNLLADAIAEAKGFETLYAYKPDEQIQIEIPPKQERQVINRSNTRNITNQRLNINRQQQETL</sequence>
<name>RS2_MYCGE</name>
<gene>
    <name type="primary">rpsB</name>
    <name type="synonym">rps2</name>
    <name type="ordered locus">MG070</name>
</gene>
<dbReference type="EMBL" id="L43967">
    <property type="protein sequence ID" value="AAC71288.1"/>
    <property type="molecule type" value="Genomic_DNA"/>
</dbReference>
<dbReference type="PIR" id="G64207">
    <property type="entry name" value="G64207"/>
</dbReference>
<dbReference type="RefSeq" id="WP_009885926.1">
    <property type="nucleotide sequence ID" value="NC_000908.2"/>
</dbReference>
<dbReference type="SMR" id="P47316"/>
<dbReference type="FunCoup" id="P47316">
    <property type="interactions" value="212"/>
</dbReference>
<dbReference type="STRING" id="243273.MG_070"/>
<dbReference type="GeneID" id="88282193"/>
<dbReference type="KEGG" id="mge:MG_070"/>
<dbReference type="eggNOG" id="COG0052">
    <property type="taxonomic scope" value="Bacteria"/>
</dbReference>
<dbReference type="HOGENOM" id="CLU_040318_0_0_14"/>
<dbReference type="InParanoid" id="P47316"/>
<dbReference type="OrthoDB" id="9808036at2"/>
<dbReference type="BioCyc" id="MGEN243273:G1GJ2-82-MONOMER"/>
<dbReference type="Proteomes" id="UP000000807">
    <property type="component" value="Chromosome"/>
</dbReference>
<dbReference type="GO" id="GO:0022627">
    <property type="term" value="C:cytosolic small ribosomal subunit"/>
    <property type="evidence" value="ECO:0000318"/>
    <property type="project" value="GO_Central"/>
</dbReference>
<dbReference type="GO" id="GO:0003735">
    <property type="term" value="F:structural constituent of ribosome"/>
    <property type="evidence" value="ECO:0000318"/>
    <property type="project" value="GO_Central"/>
</dbReference>
<dbReference type="GO" id="GO:0006412">
    <property type="term" value="P:translation"/>
    <property type="evidence" value="ECO:0007669"/>
    <property type="project" value="UniProtKB-UniRule"/>
</dbReference>
<dbReference type="CDD" id="cd01425">
    <property type="entry name" value="RPS2"/>
    <property type="match status" value="1"/>
</dbReference>
<dbReference type="FunFam" id="1.10.287.610:FF:000001">
    <property type="entry name" value="30S ribosomal protein S2"/>
    <property type="match status" value="1"/>
</dbReference>
<dbReference type="Gene3D" id="3.40.50.10490">
    <property type="entry name" value="Glucose-6-phosphate isomerase like protein, domain 1"/>
    <property type="match status" value="1"/>
</dbReference>
<dbReference type="Gene3D" id="1.10.287.610">
    <property type="entry name" value="Helix hairpin bin"/>
    <property type="match status" value="1"/>
</dbReference>
<dbReference type="HAMAP" id="MF_00291_B">
    <property type="entry name" value="Ribosomal_uS2_B"/>
    <property type="match status" value="1"/>
</dbReference>
<dbReference type="InterPro" id="IPR001865">
    <property type="entry name" value="Ribosomal_uS2"/>
</dbReference>
<dbReference type="InterPro" id="IPR005706">
    <property type="entry name" value="Ribosomal_uS2_bac/mit/plastid"/>
</dbReference>
<dbReference type="InterPro" id="IPR018130">
    <property type="entry name" value="Ribosomal_uS2_CS"/>
</dbReference>
<dbReference type="InterPro" id="IPR023591">
    <property type="entry name" value="Ribosomal_uS2_flav_dom_sf"/>
</dbReference>
<dbReference type="NCBIfam" id="TIGR01011">
    <property type="entry name" value="rpsB_bact"/>
    <property type="match status" value="1"/>
</dbReference>
<dbReference type="PANTHER" id="PTHR12534">
    <property type="entry name" value="30S RIBOSOMAL PROTEIN S2 PROKARYOTIC AND ORGANELLAR"/>
    <property type="match status" value="1"/>
</dbReference>
<dbReference type="PANTHER" id="PTHR12534:SF0">
    <property type="entry name" value="SMALL RIBOSOMAL SUBUNIT PROTEIN US2M"/>
    <property type="match status" value="1"/>
</dbReference>
<dbReference type="Pfam" id="PF00318">
    <property type="entry name" value="Ribosomal_S2"/>
    <property type="match status" value="1"/>
</dbReference>
<dbReference type="PRINTS" id="PR00395">
    <property type="entry name" value="RIBOSOMALS2"/>
</dbReference>
<dbReference type="SUPFAM" id="SSF52313">
    <property type="entry name" value="Ribosomal protein S2"/>
    <property type="match status" value="1"/>
</dbReference>
<dbReference type="PROSITE" id="PS00963">
    <property type="entry name" value="RIBOSOMAL_S2_2"/>
    <property type="match status" value="1"/>
</dbReference>
<feature type="chain" id="PRO_0000134197" description="Small ribosomal subunit protein uS2">
    <location>
        <begin position="1"/>
        <end position="284"/>
    </location>
</feature>
<evidence type="ECO:0000305" key="1"/>
<protein>
    <recommendedName>
        <fullName evidence="1">Small ribosomal subunit protein uS2</fullName>
    </recommendedName>
    <alternativeName>
        <fullName>30S ribosomal protein S2</fullName>
    </alternativeName>
</protein>
<comment type="similarity">
    <text evidence="1">Belongs to the universal ribosomal protein uS2 family.</text>
</comment>
<keyword id="KW-1185">Reference proteome</keyword>
<keyword id="KW-0687">Ribonucleoprotein</keyword>
<keyword id="KW-0689">Ribosomal protein</keyword>
<proteinExistence type="inferred from homology"/>